<comment type="function">
    <text evidence="1">NDH-1 shuttles electrons from NADH, via FMN and iron-sulfur (Fe-S) centers, to quinones in the respiratory chain. The immediate electron acceptor for the enzyme in this species is believed to be ubiquinone. Couples the redox reaction to proton translocation (for every two electrons transferred, four hydrogen ions are translocated across the cytoplasmic membrane), and thus conserves the redox energy in a proton gradient.</text>
</comment>
<comment type="catalytic activity">
    <reaction evidence="1">
        <text>a quinone + NADH + 5 H(+)(in) = a quinol + NAD(+) + 4 H(+)(out)</text>
        <dbReference type="Rhea" id="RHEA:57888"/>
        <dbReference type="ChEBI" id="CHEBI:15378"/>
        <dbReference type="ChEBI" id="CHEBI:24646"/>
        <dbReference type="ChEBI" id="CHEBI:57540"/>
        <dbReference type="ChEBI" id="CHEBI:57945"/>
        <dbReference type="ChEBI" id="CHEBI:132124"/>
    </reaction>
</comment>
<comment type="cofactor">
    <cofactor evidence="1">
        <name>[4Fe-4S] cluster</name>
        <dbReference type="ChEBI" id="CHEBI:49883"/>
    </cofactor>
    <text evidence="1">Binds 2 [4Fe-4S] clusters per subunit.</text>
</comment>
<comment type="subunit">
    <text evidence="1">NDH-1 is composed of 14 different subunits. Subunits NuoA, H, J, K, L, M, N constitute the membrane sector of the complex.</text>
</comment>
<comment type="subcellular location">
    <subcellularLocation>
        <location evidence="1">Cell inner membrane</location>
        <topology evidence="1">Peripheral membrane protein</topology>
    </subcellularLocation>
</comment>
<comment type="similarity">
    <text evidence="1">Belongs to the complex I 23 kDa subunit family.</text>
</comment>
<proteinExistence type="inferred from homology"/>
<feature type="chain" id="PRO_0000245755" description="NADH-quinone oxidoreductase subunit I">
    <location>
        <begin position="1"/>
        <end position="182"/>
    </location>
</feature>
<feature type="domain" description="4Fe-4S ferredoxin-type 1" evidence="1">
    <location>
        <begin position="43"/>
        <end position="73"/>
    </location>
</feature>
<feature type="domain" description="4Fe-4S ferredoxin-type 2" evidence="1">
    <location>
        <begin position="89"/>
        <end position="118"/>
    </location>
</feature>
<feature type="binding site" evidence="1">
    <location>
        <position position="53"/>
    </location>
    <ligand>
        <name>[4Fe-4S] cluster</name>
        <dbReference type="ChEBI" id="CHEBI:49883"/>
        <label>1</label>
    </ligand>
</feature>
<feature type="binding site" evidence="1">
    <location>
        <position position="56"/>
    </location>
    <ligand>
        <name>[4Fe-4S] cluster</name>
        <dbReference type="ChEBI" id="CHEBI:49883"/>
        <label>1</label>
    </ligand>
</feature>
<feature type="binding site" evidence="1">
    <location>
        <position position="59"/>
    </location>
    <ligand>
        <name>[4Fe-4S] cluster</name>
        <dbReference type="ChEBI" id="CHEBI:49883"/>
        <label>1</label>
    </ligand>
</feature>
<feature type="binding site" evidence="1">
    <location>
        <position position="63"/>
    </location>
    <ligand>
        <name>[4Fe-4S] cluster</name>
        <dbReference type="ChEBI" id="CHEBI:49883"/>
        <label>2</label>
    </ligand>
</feature>
<feature type="binding site" evidence="1">
    <location>
        <position position="98"/>
    </location>
    <ligand>
        <name>[4Fe-4S] cluster</name>
        <dbReference type="ChEBI" id="CHEBI:49883"/>
        <label>2</label>
    </ligand>
</feature>
<feature type="binding site" evidence="1">
    <location>
        <position position="101"/>
    </location>
    <ligand>
        <name>[4Fe-4S] cluster</name>
        <dbReference type="ChEBI" id="CHEBI:49883"/>
        <label>2</label>
    </ligand>
</feature>
<feature type="binding site" evidence="1">
    <location>
        <position position="104"/>
    </location>
    <ligand>
        <name>[4Fe-4S] cluster</name>
        <dbReference type="ChEBI" id="CHEBI:49883"/>
        <label>2</label>
    </ligand>
</feature>
<feature type="binding site" evidence="1">
    <location>
        <position position="108"/>
    </location>
    <ligand>
        <name>[4Fe-4S] cluster</name>
        <dbReference type="ChEBI" id="CHEBI:49883"/>
        <label>1</label>
    </ligand>
</feature>
<dbReference type="EC" id="7.1.1.-" evidence="1"/>
<dbReference type="EMBL" id="AE017221">
    <property type="protein sequence ID" value="AAS82254.1"/>
    <property type="molecule type" value="Genomic_DNA"/>
</dbReference>
<dbReference type="RefSeq" id="WP_011174264.1">
    <property type="nucleotide sequence ID" value="NC_005835.1"/>
</dbReference>
<dbReference type="SMR" id="Q72GD6"/>
<dbReference type="GeneID" id="3167944"/>
<dbReference type="KEGG" id="tth:TT_C1912"/>
<dbReference type="eggNOG" id="COG1143">
    <property type="taxonomic scope" value="Bacteria"/>
</dbReference>
<dbReference type="HOGENOM" id="CLU_067218_4_3_0"/>
<dbReference type="OrthoDB" id="9803192at2"/>
<dbReference type="Proteomes" id="UP000000592">
    <property type="component" value="Chromosome"/>
</dbReference>
<dbReference type="GO" id="GO:0005886">
    <property type="term" value="C:plasma membrane"/>
    <property type="evidence" value="ECO:0007669"/>
    <property type="project" value="UniProtKB-SubCell"/>
</dbReference>
<dbReference type="GO" id="GO:0051539">
    <property type="term" value="F:4 iron, 4 sulfur cluster binding"/>
    <property type="evidence" value="ECO:0007669"/>
    <property type="project" value="UniProtKB-KW"/>
</dbReference>
<dbReference type="GO" id="GO:0005506">
    <property type="term" value="F:iron ion binding"/>
    <property type="evidence" value="ECO:0007669"/>
    <property type="project" value="UniProtKB-UniRule"/>
</dbReference>
<dbReference type="GO" id="GO:0050136">
    <property type="term" value="F:NADH:ubiquinone reductase (non-electrogenic) activity"/>
    <property type="evidence" value="ECO:0007669"/>
    <property type="project" value="UniProtKB-UniRule"/>
</dbReference>
<dbReference type="GO" id="GO:0048038">
    <property type="term" value="F:quinone binding"/>
    <property type="evidence" value="ECO:0007669"/>
    <property type="project" value="UniProtKB-KW"/>
</dbReference>
<dbReference type="GO" id="GO:0009060">
    <property type="term" value="P:aerobic respiration"/>
    <property type="evidence" value="ECO:0007669"/>
    <property type="project" value="TreeGrafter"/>
</dbReference>
<dbReference type="Gene3D" id="3.30.70.3270">
    <property type="match status" value="1"/>
</dbReference>
<dbReference type="HAMAP" id="MF_01351">
    <property type="entry name" value="NDH1_NuoI"/>
    <property type="match status" value="1"/>
</dbReference>
<dbReference type="InterPro" id="IPR017896">
    <property type="entry name" value="4Fe4S_Fe-S-bd"/>
</dbReference>
<dbReference type="InterPro" id="IPR017900">
    <property type="entry name" value="4Fe4S_Fe_S_CS"/>
</dbReference>
<dbReference type="InterPro" id="IPR010226">
    <property type="entry name" value="NADH_quinone_OxRdtase_chainI"/>
</dbReference>
<dbReference type="NCBIfam" id="TIGR01971">
    <property type="entry name" value="NuoI"/>
    <property type="match status" value="1"/>
</dbReference>
<dbReference type="NCBIfam" id="NF004537">
    <property type="entry name" value="PRK05888.1-3"/>
    <property type="match status" value="1"/>
</dbReference>
<dbReference type="PANTHER" id="PTHR10849:SF20">
    <property type="entry name" value="NADH DEHYDROGENASE [UBIQUINONE] IRON-SULFUR PROTEIN 8, MITOCHONDRIAL"/>
    <property type="match status" value="1"/>
</dbReference>
<dbReference type="PANTHER" id="PTHR10849">
    <property type="entry name" value="NADH DEHYDROGENASE UBIQUINONE IRON-SULFUR PROTEIN 8, MITOCHONDRIAL"/>
    <property type="match status" value="1"/>
</dbReference>
<dbReference type="Pfam" id="PF12838">
    <property type="entry name" value="Fer4_7"/>
    <property type="match status" value="1"/>
</dbReference>
<dbReference type="SUPFAM" id="SSF54862">
    <property type="entry name" value="4Fe-4S ferredoxins"/>
    <property type="match status" value="1"/>
</dbReference>
<dbReference type="PROSITE" id="PS00198">
    <property type="entry name" value="4FE4S_FER_1"/>
    <property type="match status" value="2"/>
</dbReference>
<dbReference type="PROSITE" id="PS51379">
    <property type="entry name" value="4FE4S_FER_2"/>
    <property type="match status" value="2"/>
</dbReference>
<reference key="1">
    <citation type="journal article" date="2004" name="Nat. Biotechnol.">
        <title>The genome sequence of the extreme thermophile Thermus thermophilus.</title>
        <authorList>
            <person name="Henne A."/>
            <person name="Brueggemann H."/>
            <person name="Raasch C."/>
            <person name="Wiezer A."/>
            <person name="Hartsch T."/>
            <person name="Liesegang H."/>
            <person name="Johann A."/>
            <person name="Lienard T."/>
            <person name="Gohl O."/>
            <person name="Martinez-Arias R."/>
            <person name="Jacobi C."/>
            <person name="Starkuviene V."/>
            <person name="Schlenczeck S."/>
            <person name="Dencker S."/>
            <person name="Huber R."/>
            <person name="Klenk H.-P."/>
            <person name="Kramer W."/>
            <person name="Merkl R."/>
            <person name="Gottschalk G."/>
            <person name="Fritz H.-J."/>
        </authorList>
    </citation>
    <scope>NUCLEOTIDE SEQUENCE [LARGE SCALE GENOMIC DNA]</scope>
    <source>
        <strain>ATCC BAA-163 / DSM 7039 / HB27</strain>
    </source>
</reference>
<accession>Q72GD6</accession>
<sequence>MTLKALAQSLGITLKYLFSKPVTVPYPDAPVALKPRFHGRHVLTRHPNGLEKCIGCSLCAAACPAYAIYVEPAENDPENPVSAGERYAKVYEINMLRCIFCGLCEEACPTGAIVLGYDFEMADYEYSDLVYGKEDMLVDVVGTKPQRREAKRTGKPVKVGYVVPYVRPELEGFKAPTEGGKR</sequence>
<keyword id="KW-0004">4Fe-4S</keyword>
<keyword id="KW-0997">Cell inner membrane</keyword>
<keyword id="KW-1003">Cell membrane</keyword>
<keyword id="KW-0408">Iron</keyword>
<keyword id="KW-0411">Iron-sulfur</keyword>
<keyword id="KW-0472">Membrane</keyword>
<keyword id="KW-0479">Metal-binding</keyword>
<keyword id="KW-0520">NAD</keyword>
<keyword id="KW-0874">Quinone</keyword>
<keyword id="KW-0677">Repeat</keyword>
<keyword id="KW-1278">Translocase</keyword>
<name>NUOI_THET2</name>
<protein>
    <recommendedName>
        <fullName evidence="1">NADH-quinone oxidoreductase subunit I</fullName>
        <ecNumber evidence="1">7.1.1.-</ecNumber>
    </recommendedName>
    <alternativeName>
        <fullName evidence="1">NADH dehydrogenase I subunit I</fullName>
    </alternativeName>
    <alternativeName>
        <fullName evidence="1">NDH-1 subunit I</fullName>
    </alternativeName>
</protein>
<evidence type="ECO:0000255" key="1">
    <source>
        <dbReference type="HAMAP-Rule" id="MF_01351"/>
    </source>
</evidence>
<organism>
    <name type="scientific">Thermus thermophilus (strain ATCC BAA-163 / DSM 7039 / HB27)</name>
    <dbReference type="NCBI Taxonomy" id="262724"/>
    <lineage>
        <taxon>Bacteria</taxon>
        <taxon>Thermotogati</taxon>
        <taxon>Deinococcota</taxon>
        <taxon>Deinococci</taxon>
        <taxon>Thermales</taxon>
        <taxon>Thermaceae</taxon>
        <taxon>Thermus</taxon>
    </lineage>
</organism>
<gene>
    <name evidence="1" type="primary">nuoI</name>
    <name type="ordered locus">TT_C1912</name>
</gene>